<sequence>MTSVSDCFAQLRDRGQCALIPFLTAGDPDLATTASALRQLDASGADLIELGVPYSDPLADGPVIQAAATRALQRGTRLDQVLEMVTELSPEIRAPIILFTYYNPIYHRGVAEFLQQIAKAGVRGLVVPDLPLEESENLLQQAADLGIEVTLLVAPTSSKERIEKIALRSQGFIYLVSTTGVTGMRTKVENRVQDLIADLRQVTDKPIGVGFGISRTEHARQVMDWGADAAIVGSAFVNRLSEGSPSQGLSAISTFCRSLKSSLLLDA</sequence>
<organism>
    <name type="scientific">Acaryochloris marina (strain MBIC 11017)</name>
    <dbReference type="NCBI Taxonomy" id="329726"/>
    <lineage>
        <taxon>Bacteria</taxon>
        <taxon>Bacillati</taxon>
        <taxon>Cyanobacteriota</taxon>
        <taxon>Cyanophyceae</taxon>
        <taxon>Acaryochloridales</taxon>
        <taxon>Acaryochloridaceae</taxon>
        <taxon>Acaryochloris</taxon>
    </lineage>
</organism>
<comment type="function">
    <text evidence="1">The alpha subunit is responsible for the aldol cleavage of indoleglycerol phosphate to indole and glyceraldehyde 3-phosphate.</text>
</comment>
<comment type="catalytic activity">
    <reaction evidence="1">
        <text>(1S,2R)-1-C-(indol-3-yl)glycerol 3-phosphate + L-serine = D-glyceraldehyde 3-phosphate + L-tryptophan + H2O</text>
        <dbReference type="Rhea" id="RHEA:10532"/>
        <dbReference type="ChEBI" id="CHEBI:15377"/>
        <dbReference type="ChEBI" id="CHEBI:33384"/>
        <dbReference type="ChEBI" id="CHEBI:57912"/>
        <dbReference type="ChEBI" id="CHEBI:58866"/>
        <dbReference type="ChEBI" id="CHEBI:59776"/>
        <dbReference type="EC" id="4.2.1.20"/>
    </reaction>
</comment>
<comment type="pathway">
    <text evidence="1">Amino-acid biosynthesis; L-tryptophan biosynthesis; L-tryptophan from chorismate: step 5/5.</text>
</comment>
<comment type="subunit">
    <text evidence="1">Tetramer of two alpha and two beta chains.</text>
</comment>
<comment type="similarity">
    <text evidence="1">Belongs to the TrpA family.</text>
</comment>
<keyword id="KW-0028">Amino-acid biosynthesis</keyword>
<keyword id="KW-0057">Aromatic amino acid biosynthesis</keyword>
<keyword id="KW-0456">Lyase</keyword>
<keyword id="KW-1185">Reference proteome</keyword>
<keyword id="KW-0822">Tryptophan biosynthesis</keyword>
<gene>
    <name evidence="1" type="primary">trpA</name>
    <name type="ordered locus">AM1_1347</name>
</gene>
<name>TRPA_ACAM1</name>
<evidence type="ECO:0000255" key="1">
    <source>
        <dbReference type="HAMAP-Rule" id="MF_00131"/>
    </source>
</evidence>
<reference key="1">
    <citation type="journal article" date="2008" name="Proc. Natl. Acad. Sci. U.S.A.">
        <title>Niche adaptation and genome expansion in the chlorophyll d-producing cyanobacterium Acaryochloris marina.</title>
        <authorList>
            <person name="Swingley W.D."/>
            <person name="Chen M."/>
            <person name="Cheung P.C."/>
            <person name="Conrad A.L."/>
            <person name="Dejesa L.C."/>
            <person name="Hao J."/>
            <person name="Honchak B.M."/>
            <person name="Karbach L.E."/>
            <person name="Kurdoglu A."/>
            <person name="Lahiri S."/>
            <person name="Mastrian S.D."/>
            <person name="Miyashita H."/>
            <person name="Page L."/>
            <person name="Ramakrishna P."/>
            <person name="Satoh S."/>
            <person name="Sattley W.M."/>
            <person name="Shimada Y."/>
            <person name="Taylor H.L."/>
            <person name="Tomo T."/>
            <person name="Tsuchiya T."/>
            <person name="Wang Z.T."/>
            <person name="Raymond J."/>
            <person name="Mimuro M."/>
            <person name="Blankenship R.E."/>
            <person name="Touchman J.W."/>
        </authorList>
    </citation>
    <scope>NUCLEOTIDE SEQUENCE [LARGE SCALE GENOMIC DNA]</scope>
    <source>
        <strain>MBIC 11017</strain>
    </source>
</reference>
<protein>
    <recommendedName>
        <fullName evidence="1">Tryptophan synthase alpha chain</fullName>
        <ecNumber evidence="1">4.2.1.20</ecNumber>
    </recommendedName>
</protein>
<proteinExistence type="inferred from homology"/>
<dbReference type="EC" id="4.2.1.20" evidence="1"/>
<dbReference type="EMBL" id="CP000828">
    <property type="protein sequence ID" value="ABW26379.1"/>
    <property type="molecule type" value="Genomic_DNA"/>
</dbReference>
<dbReference type="RefSeq" id="WP_012161914.1">
    <property type="nucleotide sequence ID" value="NC_009925.1"/>
</dbReference>
<dbReference type="SMR" id="B0C6F8"/>
<dbReference type="STRING" id="329726.AM1_1347"/>
<dbReference type="KEGG" id="amr:AM1_1347"/>
<dbReference type="eggNOG" id="COG0159">
    <property type="taxonomic scope" value="Bacteria"/>
</dbReference>
<dbReference type="HOGENOM" id="CLU_016734_0_2_3"/>
<dbReference type="OrthoDB" id="9804578at2"/>
<dbReference type="UniPathway" id="UPA00035">
    <property type="reaction ID" value="UER00044"/>
</dbReference>
<dbReference type="Proteomes" id="UP000000268">
    <property type="component" value="Chromosome"/>
</dbReference>
<dbReference type="GO" id="GO:0005829">
    <property type="term" value="C:cytosol"/>
    <property type="evidence" value="ECO:0007669"/>
    <property type="project" value="TreeGrafter"/>
</dbReference>
<dbReference type="GO" id="GO:0004834">
    <property type="term" value="F:tryptophan synthase activity"/>
    <property type="evidence" value="ECO:0007669"/>
    <property type="project" value="UniProtKB-UniRule"/>
</dbReference>
<dbReference type="CDD" id="cd04724">
    <property type="entry name" value="Tryptophan_synthase_alpha"/>
    <property type="match status" value="1"/>
</dbReference>
<dbReference type="FunFam" id="3.20.20.70:FF:000107">
    <property type="entry name" value="Tryptophan synthase alpha chain, chloroplastic"/>
    <property type="match status" value="1"/>
</dbReference>
<dbReference type="Gene3D" id="3.20.20.70">
    <property type="entry name" value="Aldolase class I"/>
    <property type="match status" value="1"/>
</dbReference>
<dbReference type="HAMAP" id="MF_00131">
    <property type="entry name" value="Trp_synth_alpha"/>
    <property type="match status" value="1"/>
</dbReference>
<dbReference type="InterPro" id="IPR013785">
    <property type="entry name" value="Aldolase_TIM"/>
</dbReference>
<dbReference type="InterPro" id="IPR011060">
    <property type="entry name" value="RibuloseP-bd_barrel"/>
</dbReference>
<dbReference type="InterPro" id="IPR018204">
    <property type="entry name" value="Trp_synthase_alpha_AS"/>
</dbReference>
<dbReference type="InterPro" id="IPR002028">
    <property type="entry name" value="Trp_synthase_suA"/>
</dbReference>
<dbReference type="NCBIfam" id="TIGR00262">
    <property type="entry name" value="trpA"/>
    <property type="match status" value="1"/>
</dbReference>
<dbReference type="PANTHER" id="PTHR43406:SF1">
    <property type="entry name" value="TRYPTOPHAN SYNTHASE ALPHA CHAIN, CHLOROPLASTIC"/>
    <property type="match status" value="1"/>
</dbReference>
<dbReference type="PANTHER" id="PTHR43406">
    <property type="entry name" value="TRYPTOPHAN SYNTHASE, ALPHA CHAIN"/>
    <property type="match status" value="1"/>
</dbReference>
<dbReference type="Pfam" id="PF00290">
    <property type="entry name" value="Trp_syntA"/>
    <property type="match status" value="1"/>
</dbReference>
<dbReference type="SUPFAM" id="SSF51366">
    <property type="entry name" value="Ribulose-phoshate binding barrel"/>
    <property type="match status" value="1"/>
</dbReference>
<dbReference type="PROSITE" id="PS00167">
    <property type="entry name" value="TRP_SYNTHASE_ALPHA"/>
    <property type="match status" value="1"/>
</dbReference>
<feature type="chain" id="PRO_1000076344" description="Tryptophan synthase alpha chain">
    <location>
        <begin position="1"/>
        <end position="267"/>
    </location>
</feature>
<feature type="active site" description="Proton acceptor" evidence="1">
    <location>
        <position position="49"/>
    </location>
</feature>
<feature type="active site" description="Proton acceptor" evidence="1">
    <location>
        <position position="60"/>
    </location>
</feature>
<accession>B0C6F8</accession>